<keyword id="KW-0028">Amino-acid biosynthesis</keyword>
<keyword id="KW-0057">Aromatic amino acid biosynthesis</keyword>
<keyword id="KW-0210">Decarboxylase</keyword>
<keyword id="KW-0456">Lyase</keyword>
<keyword id="KW-1185">Reference proteome</keyword>
<keyword id="KW-0822">Tryptophan biosynthesis</keyword>
<sequence length="263" mass="28169">MTDILKKIEAYKRDEIAVAKHARPLGEIEAAARAAPRVRPFAGAIATSLAEGRTALIAEIKKASPSKGLIRADFDPPALARAYQRGGATCLSVLTDTPSFQGAPEFLGSARAAVDLPVLRKDFMYDTYQVAEARAWGADCILIIMAGVDDLLARDLADAAAAYGMDAIVEVHDDAELERALDLPCRLIGINNRNLRTFETSLETSERLAPRVPKDRIAIGESGIFTPQDVARLAKVGIGTILVGESLMRQEDVASATSQLLAV</sequence>
<protein>
    <recommendedName>
        <fullName evidence="1">Indole-3-glycerol phosphate synthase</fullName>
        <shortName evidence="1">IGPS</shortName>
        <ecNumber evidence="1">4.1.1.48</ecNumber>
    </recommendedName>
</protein>
<proteinExistence type="inferred from homology"/>
<gene>
    <name evidence="1" type="primary">trpC</name>
    <name type="ordered locus">Xaut_4375</name>
</gene>
<comment type="catalytic activity">
    <reaction evidence="1">
        <text>1-(2-carboxyphenylamino)-1-deoxy-D-ribulose 5-phosphate + H(+) = (1S,2R)-1-C-(indol-3-yl)glycerol 3-phosphate + CO2 + H2O</text>
        <dbReference type="Rhea" id="RHEA:23476"/>
        <dbReference type="ChEBI" id="CHEBI:15377"/>
        <dbReference type="ChEBI" id="CHEBI:15378"/>
        <dbReference type="ChEBI" id="CHEBI:16526"/>
        <dbReference type="ChEBI" id="CHEBI:58613"/>
        <dbReference type="ChEBI" id="CHEBI:58866"/>
        <dbReference type="EC" id="4.1.1.48"/>
    </reaction>
</comment>
<comment type="pathway">
    <text evidence="1">Amino-acid biosynthesis; L-tryptophan biosynthesis; L-tryptophan from chorismate: step 4/5.</text>
</comment>
<comment type="similarity">
    <text evidence="1">Belongs to the TrpC family.</text>
</comment>
<feature type="chain" id="PRO_1000095908" description="Indole-3-glycerol phosphate synthase">
    <location>
        <begin position="1"/>
        <end position="263"/>
    </location>
</feature>
<name>TRPC_XANP2</name>
<organism>
    <name type="scientific">Xanthobacter autotrophicus (strain ATCC BAA-1158 / Py2)</name>
    <dbReference type="NCBI Taxonomy" id="78245"/>
    <lineage>
        <taxon>Bacteria</taxon>
        <taxon>Pseudomonadati</taxon>
        <taxon>Pseudomonadota</taxon>
        <taxon>Alphaproteobacteria</taxon>
        <taxon>Hyphomicrobiales</taxon>
        <taxon>Xanthobacteraceae</taxon>
        <taxon>Xanthobacter</taxon>
    </lineage>
</organism>
<accession>A7INK2</accession>
<evidence type="ECO:0000255" key="1">
    <source>
        <dbReference type="HAMAP-Rule" id="MF_00134"/>
    </source>
</evidence>
<reference key="1">
    <citation type="submission" date="2007-07" db="EMBL/GenBank/DDBJ databases">
        <title>Complete sequence of chromosome of Xanthobacter autotrophicus Py2.</title>
        <authorList>
            <consortium name="US DOE Joint Genome Institute"/>
            <person name="Copeland A."/>
            <person name="Lucas S."/>
            <person name="Lapidus A."/>
            <person name="Barry K."/>
            <person name="Glavina del Rio T."/>
            <person name="Hammon N."/>
            <person name="Israni S."/>
            <person name="Dalin E."/>
            <person name="Tice H."/>
            <person name="Pitluck S."/>
            <person name="Sims D."/>
            <person name="Brettin T."/>
            <person name="Bruce D."/>
            <person name="Detter J.C."/>
            <person name="Han C."/>
            <person name="Tapia R."/>
            <person name="Brainard J."/>
            <person name="Schmutz J."/>
            <person name="Larimer F."/>
            <person name="Land M."/>
            <person name="Hauser L."/>
            <person name="Kyrpides N."/>
            <person name="Kim E."/>
            <person name="Ensigns S.A."/>
            <person name="Richardson P."/>
        </authorList>
    </citation>
    <scope>NUCLEOTIDE SEQUENCE [LARGE SCALE GENOMIC DNA]</scope>
    <source>
        <strain>ATCC BAA-1158 / Py2</strain>
    </source>
</reference>
<dbReference type="EC" id="4.1.1.48" evidence="1"/>
<dbReference type="EMBL" id="CP000781">
    <property type="protein sequence ID" value="ABS69596.1"/>
    <property type="molecule type" value="Genomic_DNA"/>
</dbReference>
<dbReference type="SMR" id="A7INK2"/>
<dbReference type="STRING" id="78245.Xaut_4375"/>
<dbReference type="KEGG" id="xau:Xaut_4375"/>
<dbReference type="eggNOG" id="COG0134">
    <property type="taxonomic scope" value="Bacteria"/>
</dbReference>
<dbReference type="HOGENOM" id="CLU_034247_2_0_5"/>
<dbReference type="OrthoDB" id="9804217at2"/>
<dbReference type="PhylomeDB" id="A7INK2"/>
<dbReference type="UniPathway" id="UPA00035">
    <property type="reaction ID" value="UER00043"/>
</dbReference>
<dbReference type="Proteomes" id="UP000002417">
    <property type="component" value="Chromosome"/>
</dbReference>
<dbReference type="GO" id="GO:0004425">
    <property type="term" value="F:indole-3-glycerol-phosphate synthase activity"/>
    <property type="evidence" value="ECO:0007669"/>
    <property type="project" value="UniProtKB-UniRule"/>
</dbReference>
<dbReference type="GO" id="GO:0004640">
    <property type="term" value="F:phosphoribosylanthranilate isomerase activity"/>
    <property type="evidence" value="ECO:0007669"/>
    <property type="project" value="TreeGrafter"/>
</dbReference>
<dbReference type="GO" id="GO:0000162">
    <property type="term" value="P:L-tryptophan biosynthetic process"/>
    <property type="evidence" value="ECO:0007669"/>
    <property type="project" value="UniProtKB-UniRule"/>
</dbReference>
<dbReference type="CDD" id="cd00331">
    <property type="entry name" value="IGPS"/>
    <property type="match status" value="1"/>
</dbReference>
<dbReference type="FunFam" id="3.20.20.70:FF:000024">
    <property type="entry name" value="Indole-3-glycerol phosphate synthase"/>
    <property type="match status" value="1"/>
</dbReference>
<dbReference type="Gene3D" id="3.20.20.70">
    <property type="entry name" value="Aldolase class I"/>
    <property type="match status" value="1"/>
</dbReference>
<dbReference type="HAMAP" id="MF_00134_B">
    <property type="entry name" value="IGPS_B"/>
    <property type="match status" value="1"/>
</dbReference>
<dbReference type="InterPro" id="IPR013785">
    <property type="entry name" value="Aldolase_TIM"/>
</dbReference>
<dbReference type="InterPro" id="IPR045186">
    <property type="entry name" value="Indole-3-glycerol_P_synth"/>
</dbReference>
<dbReference type="InterPro" id="IPR013798">
    <property type="entry name" value="Indole-3-glycerol_P_synth_dom"/>
</dbReference>
<dbReference type="InterPro" id="IPR001468">
    <property type="entry name" value="Indole-3-GlycerolPSynthase_CS"/>
</dbReference>
<dbReference type="InterPro" id="IPR011060">
    <property type="entry name" value="RibuloseP-bd_barrel"/>
</dbReference>
<dbReference type="NCBIfam" id="NF001370">
    <property type="entry name" value="PRK00278.1-2"/>
    <property type="match status" value="1"/>
</dbReference>
<dbReference type="NCBIfam" id="NF001373">
    <property type="entry name" value="PRK00278.1-6"/>
    <property type="match status" value="1"/>
</dbReference>
<dbReference type="NCBIfam" id="NF001377">
    <property type="entry name" value="PRK00278.2-4"/>
    <property type="match status" value="1"/>
</dbReference>
<dbReference type="PANTHER" id="PTHR22854:SF2">
    <property type="entry name" value="INDOLE-3-GLYCEROL-PHOSPHATE SYNTHASE"/>
    <property type="match status" value="1"/>
</dbReference>
<dbReference type="PANTHER" id="PTHR22854">
    <property type="entry name" value="TRYPTOPHAN BIOSYNTHESIS PROTEIN"/>
    <property type="match status" value="1"/>
</dbReference>
<dbReference type="Pfam" id="PF00218">
    <property type="entry name" value="IGPS"/>
    <property type="match status" value="1"/>
</dbReference>
<dbReference type="SUPFAM" id="SSF51366">
    <property type="entry name" value="Ribulose-phoshate binding barrel"/>
    <property type="match status" value="1"/>
</dbReference>
<dbReference type="PROSITE" id="PS00614">
    <property type="entry name" value="IGPS"/>
    <property type="match status" value="1"/>
</dbReference>